<name>ETS4_DROME</name>
<sequence>MEYEKMLYMPAASEMPHSPQLKPHQFQAHTPTDQYSSYADNFDLSLLPQESASIPTTVFQYNAPQIKVECAWDSQPIQQQQQPTAPYTNPSSHQLIPPPAYPHSAYPSPQSSPLQSEFAAYGLGRFGGSYDSLNSPSPSLEAVSIKQELHILPPSPPESNCETPSPRSSCGESIKAEPLDADIESLIDLNSLLQQQSLQSPQNLQDTKPDHQLLRECLEDTSFQKRHNLKPLALESFIGGLAEVRGDFEPVISLALEHAKREADAICAELQISQDPNGWSPAQVHAWLRSTLAQFRLPPVADLELHFCENGAALALLSEEEFVRRLPESGSTLHAQLEIWKMAYADQPAHQQHSQQSASTDHWPASYAMPHLDLDYNEDSEDDDDMEADAQVAPLNGSTTSPPATNASNGGTATVKRPNGGRTGGGGSHIHLWQFLKELLASPQVNGTAIRWIDRSKGIFKIEDSVRVAKLWGRRKNRPAMNYDKLSRSIRQYYKKGIMKKTERSQRLVYQFCHPYSQ</sequence>
<protein>
    <recommendedName>
        <fullName>DNA-binding protein D-ETS-4</fullName>
    </recommendedName>
</protein>
<proteinExistence type="evidence at transcript level"/>
<gene>
    <name type="primary">Ets98B</name>
    <name type="synonym">ETS-4</name>
    <name type="ORF">CG5583</name>
</gene>
<feature type="chain" id="PRO_0000204108" description="DNA-binding protein D-ETS-4">
    <location>
        <begin position="1"/>
        <end position="518"/>
    </location>
</feature>
<feature type="domain" description="PNT" evidence="2">
    <location>
        <begin position="258"/>
        <end position="344"/>
    </location>
</feature>
<feature type="DNA-binding region" description="ETS" evidence="1">
    <location>
        <begin position="430"/>
        <end position="513"/>
    </location>
</feature>
<feature type="region of interest" description="Disordered" evidence="3">
    <location>
        <begin position="74"/>
        <end position="113"/>
    </location>
</feature>
<feature type="region of interest" description="Disordered" evidence="3">
    <location>
        <begin position="152"/>
        <end position="172"/>
    </location>
</feature>
<feature type="region of interest" description="Disordered" evidence="3">
    <location>
        <begin position="393"/>
        <end position="426"/>
    </location>
</feature>
<feature type="compositionally biased region" description="Polar residues" evidence="3">
    <location>
        <begin position="84"/>
        <end position="94"/>
    </location>
</feature>
<feature type="compositionally biased region" description="Low complexity" evidence="3">
    <location>
        <begin position="102"/>
        <end position="113"/>
    </location>
</feature>
<feature type="compositionally biased region" description="Polar residues" evidence="3">
    <location>
        <begin position="158"/>
        <end position="171"/>
    </location>
</feature>
<feature type="compositionally biased region" description="Polar residues" evidence="3">
    <location>
        <begin position="396"/>
        <end position="412"/>
    </location>
</feature>
<evidence type="ECO:0000255" key="1">
    <source>
        <dbReference type="PROSITE-ProRule" id="PRU00237"/>
    </source>
</evidence>
<evidence type="ECO:0000255" key="2">
    <source>
        <dbReference type="PROSITE-ProRule" id="PRU00762"/>
    </source>
</evidence>
<evidence type="ECO:0000256" key="3">
    <source>
        <dbReference type="SAM" id="MobiDB-lite"/>
    </source>
</evidence>
<evidence type="ECO:0000269" key="4">
    <source>
    </source>
</evidence>
<evidence type="ECO:0000305" key="5"/>
<dbReference type="EMBL" id="AE014297">
    <property type="protein sequence ID" value="AAF56746.2"/>
    <property type="molecule type" value="Genomic_DNA"/>
</dbReference>
<dbReference type="EMBL" id="M88474">
    <property type="protein sequence ID" value="AAA28451.1"/>
    <property type="molecule type" value="Genomic_DNA"/>
</dbReference>
<dbReference type="PIR" id="S28821">
    <property type="entry name" value="S28821"/>
</dbReference>
<dbReference type="RefSeq" id="NP_524535.2">
    <property type="nucleotide sequence ID" value="NM_079811.4"/>
</dbReference>
<dbReference type="SMR" id="P29775"/>
<dbReference type="BioGRID" id="68216">
    <property type="interactions" value="2"/>
</dbReference>
<dbReference type="DIP" id="DIP-23688N"/>
<dbReference type="FunCoup" id="P29775">
    <property type="interactions" value="70"/>
</dbReference>
<dbReference type="STRING" id="7227.FBpp0084594"/>
<dbReference type="PaxDb" id="7227-FBpp0084594"/>
<dbReference type="DNASU" id="43334"/>
<dbReference type="EnsemblMetazoa" id="FBtr0085224">
    <property type="protein sequence ID" value="FBpp0084594"/>
    <property type="gene ID" value="FBgn0005659"/>
</dbReference>
<dbReference type="GeneID" id="43334"/>
<dbReference type="KEGG" id="dme:Dmel_CG5583"/>
<dbReference type="AGR" id="FB:FBgn0005659"/>
<dbReference type="CTD" id="43334"/>
<dbReference type="FlyBase" id="FBgn0005659">
    <property type="gene designation" value="Ets98B"/>
</dbReference>
<dbReference type="VEuPathDB" id="VectorBase:FBgn0005659"/>
<dbReference type="eggNOG" id="KOG3805">
    <property type="taxonomic scope" value="Eukaryota"/>
</dbReference>
<dbReference type="GeneTree" id="ENSGT00940000157549"/>
<dbReference type="InParanoid" id="P29775"/>
<dbReference type="OMA" id="PHQFQAQ"/>
<dbReference type="OrthoDB" id="5961210at2759"/>
<dbReference type="PhylomeDB" id="P29775"/>
<dbReference type="BioGRID-ORCS" id="43334">
    <property type="hits" value="0 hits in 1 CRISPR screen"/>
</dbReference>
<dbReference type="GenomeRNAi" id="43334"/>
<dbReference type="PRO" id="PR:P29775"/>
<dbReference type="Proteomes" id="UP000000803">
    <property type="component" value="Chromosome 3R"/>
</dbReference>
<dbReference type="Bgee" id="FBgn0005659">
    <property type="expression patterns" value="Expressed in epithelial cell in haltere and 136 other cell types or tissues"/>
</dbReference>
<dbReference type="ExpressionAtlas" id="P29775">
    <property type="expression patterns" value="baseline and differential"/>
</dbReference>
<dbReference type="GO" id="GO:0005634">
    <property type="term" value="C:nucleus"/>
    <property type="evidence" value="ECO:0000318"/>
    <property type="project" value="GO_Central"/>
</dbReference>
<dbReference type="GO" id="GO:0000981">
    <property type="term" value="F:DNA-binding transcription factor activity, RNA polymerase II-specific"/>
    <property type="evidence" value="ECO:0000318"/>
    <property type="project" value="GO_Central"/>
</dbReference>
<dbReference type="GO" id="GO:0043565">
    <property type="term" value="F:sequence-specific DNA binding"/>
    <property type="evidence" value="ECO:0007669"/>
    <property type="project" value="InterPro"/>
</dbReference>
<dbReference type="GO" id="GO:0030154">
    <property type="term" value="P:cell differentiation"/>
    <property type="evidence" value="ECO:0000318"/>
    <property type="project" value="GO_Central"/>
</dbReference>
<dbReference type="GO" id="GO:0006357">
    <property type="term" value="P:regulation of transcription by RNA polymerase II"/>
    <property type="evidence" value="ECO:0000318"/>
    <property type="project" value="GO_Central"/>
</dbReference>
<dbReference type="CDD" id="cd08532">
    <property type="entry name" value="SAM_PNT-PDEF-like"/>
    <property type="match status" value="1"/>
</dbReference>
<dbReference type="FunFam" id="1.10.10.10:FF:000220">
    <property type="entry name" value="SAM pointed domain-containing Ets transcription factor"/>
    <property type="match status" value="1"/>
</dbReference>
<dbReference type="FunFam" id="1.10.150.50:FF:000104">
    <property type="entry name" value="Uncharacterized protein, isoform B"/>
    <property type="match status" value="1"/>
</dbReference>
<dbReference type="Gene3D" id="1.10.150.50">
    <property type="entry name" value="Transcription Factor, Ets-1"/>
    <property type="match status" value="1"/>
</dbReference>
<dbReference type="Gene3D" id="1.10.10.10">
    <property type="entry name" value="Winged helix-like DNA-binding domain superfamily/Winged helix DNA-binding domain"/>
    <property type="match status" value="1"/>
</dbReference>
<dbReference type="InterPro" id="IPR000418">
    <property type="entry name" value="Ets_dom"/>
</dbReference>
<dbReference type="InterPro" id="IPR046328">
    <property type="entry name" value="ETS_fam"/>
</dbReference>
<dbReference type="InterPro" id="IPR003118">
    <property type="entry name" value="Pointed_dom"/>
</dbReference>
<dbReference type="InterPro" id="IPR013761">
    <property type="entry name" value="SAM/pointed_sf"/>
</dbReference>
<dbReference type="InterPro" id="IPR036388">
    <property type="entry name" value="WH-like_DNA-bd_sf"/>
</dbReference>
<dbReference type="InterPro" id="IPR036390">
    <property type="entry name" value="WH_DNA-bd_sf"/>
</dbReference>
<dbReference type="PANTHER" id="PTHR11849">
    <property type="entry name" value="ETS"/>
    <property type="match status" value="1"/>
</dbReference>
<dbReference type="PANTHER" id="PTHR11849:SF182">
    <property type="entry name" value="SAM POINTED DOMAIN-CONTAINING ETS TRANSCRIPTION FACTOR"/>
    <property type="match status" value="1"/>
</dbReference>
<dbReference type="Pfam" id="PF00178">
    <property type="entry name" value="Ets"/>
    <property type="match status" value="1"/>
</dbReference>
<dbReference type="Pfam" id="PF02198">
    <property type="entry name" value="SAM_PNT"/>
    <property type="match status" value="1"/>
</dbReference>
<dbReference type="PRINTS" id="PR00454">
    <property type="entry name" value="ETSDOMAIN"/>
</dbReference>
<dbReference type="SMART" id="SM00413">
    <property type="entry name" value="ETS"/>
    <property type="match status" value="1"/>
</dbReference>
<dbReference type="SMART" id="SM00251">
    <property type="entry name" value="SAM_PNT"/>
    <property type="match status" value="1"/>
</dbReference>
<dbReference type="SUPFAM" id="SSF47769">
    <property type="entry name" value="SAM/Pointed domain"/>
    <property type="match status" value="1"/>
</dbReference>
<dbReference type="SUPFAM" id="SSF46785">
    <property type="entry name" value="Winged helix' DNA-binding domain"/>
    <property type="match status" value="1"/>
</dbReference>
<dbReference type="PROSITE" id="PS00345">
    <property type="entry name" value="ETS_DOMAIN_1"/>
    <property type="match status" value="1"/>
</dbReference>
<dbReference type="PROSITE" id="PS00346">
    <property type="entry name" value="ETS_DOMAIN_2"/>
    <property type="match status" value="1"/>
</dbReference>
<dbReference type="PROSITE" id="PS50061">
    <property type="entry name" value="ETS_DOMAIN_3"/>
    <property type="match status" value="1"/>
</dbReference>
<dbReference type="PROSITE" id="PS51433">
    <property type="entry name" value="PNT"/>
    <property type="match status" value="1"/>
</dbReference>
<comment type="function">
    <text evidence="4">May have a role in germline development.</text>
</comment>
<comment type="subcellular location">
    <subcellularLocation>
        <location>Nucleus</location>
    </subcellularLocation>
</comment>
<comment type="tissue specificity">
    <text evidence="4">Transient high expression in pole cells during embryonic stages 8-11.</text>
</comment>
<comment type="developmental stage">
    <text evidence="4">Expressed throughout development with lower levels during larval development.</text>
</comment>
<comment type="similarity">
    <text evidence="5">Belongs to the ETS family.</text>
</comment>
<accession>P29775</accession>
<accession>Q9VB00</accession>
<keyword id="KW-0238">DNA-binding</keyword>
<keyword id="KW-0539">Nucleus</keyword>
<keyword id="KW-1185">Reference proteome</keyword>
<reference key="1">
    <citation type="journal article" date="2000" name="Science">
        <title>The genome sequence of Drosophila melanogaster.</title>
        <authorList>
            <person name="Adams M.D."/>
            <person name="Celniker S.E."/>
            <person name="Holt R.A."/>
            <person name="Evans C.A."/>
            <person name="Gocayne J.D."/>
            <person name="Amanatides P.G."/>
            <person name="Scherer S.E."/>
            <person name="Li P.W."/>
            <person name="Hoskins R.A."/>
            <person name="Galle R.F."/>
            <person name="George R.A."/>
            <person name="Lewis S.E."/>
            <person name="Richards S."/>
            <person name="Ashburner M."/>
            <person name="Henderson S.N."/>
            <person name="Sutton G.G."/>
            <person name="Wortman J.R."/>
            <person name="Yandell M.D."/>
            <person name="Zhang Q."/>
            <person name="Chen L.X."/>
            <person name="Brandon R.C."/>
            <person name="Rogers Y.-H.C."/>
            <person name="Blazej R.G."/>
            <person name="Champe M."/>
            <person name="Pfeiffer B.D."/>
            <person name="Wan K.H."/>
            <person name="Doyle C."/>
            <person name="Baxter E.G."/>
            <person name="Helt G."/>
            <person name="Nelson C.R."/>
            <person name="Miklos G.L.G."/>
            <person name="Abril J.F."/>
            <person name="Agbayani A."/>
            <person name="An H.-J."/>
            <person name="Andrews-Pfannkoch C."/>
            <person name="Baldwin D."/>
            <person name="Ballew R.M."/>
            <person name="Basu A."/>
            <person name="Baxendale J."/>
            <person name="Bayraktaroglu L."/>
            <person name="Beasley E.M."/>
            <person name="Beeson K.Y."/>
            <person name="Benos P.V."/>
            <person name="Berman B.P."/>
            <person name="Bhandari D."/>
            <person name="Bolshakov S."/>
            <person name="Borkova D."/>
            <person name="Botchan M.R."/>
            <person name="Bouck J."/>
            <person name="Brokstein P."/>
            <person name="Brottier P."/>
            <person name="Burtis K.C."/>
            <person name="Busam D.A."/>
            <person name="Butler H."/>
            <person name="Cadieu E."/>
            <person name="Center A."/>
            <person name="Chandra I."/>
            <person name="Cherry J.M."/>
            <person name="Cawley S."/>
            <person name="Dahlke C."/>
            <person name="Davenport L.B."/>
            <person name="Davies P."/>
            <person name="de Pablos B."/>
            <person name="Delcher A."/>
            <person name="Deng Z."/>
            <person name="Mays A.D."/>
            <person name="Dew I."/>
            <person name="Dietz S.M."/>
            <person name="Dodson K."/>
            <person name="Doup L.E."/>
            <person name="Downes M."/>
            <person name="Dugan-Rocha S."/>
            <person name="Dunkov B.C."/>
            <person name="Dunn P."/>
            <person name="Durbin K.J."/>
            <person name="Evangelista C.C."/>
            <person name="Ferraz C."/>
            <person name="Ferriera S."/>
            <person name="Fleischmann W."/>
            <person name="Fosler C."/>
            <person name="Gabrielian A.E."/>
            <person name="Garg N.S."/>
            <person name="Gelbart W.M."/>
            <person name="Glasser K."/>
            <person name="Glodek A."/>
            <person name="Gong F."/>
            <person name="Gorrell J.H."/>
            <person name="Gu Z."/>
            <person name="Guan P."/>
            <person name="Harris M."/>
            <person name="Harris N.L."/>
            <person name="Harvey D.A."/>
            <person name="Heiman T.J."/>
            <person name="Hernandez J.R."/>
            <person name="Houck J."/>
            <person name="Hostin D."/>
            <person name="Houston K.A."/>
            <person name="Howland T.J."/>
            <person name="Wei M.-H."/>
            <person name="Ibegwam C."/>
            <person name="Jalali M."/>
            <person name="Kalush F."/>
            <person name="Karpen G.H."/>
            <person name="Ke Z."/>
            <person name="Kennison J.A."/>
            <person name="Ketchum K.A."/>
            <person name="Kimmel B.E."/>
            <person name="Kodira C.D."/>
            <person name="Kraft C.L."/>
            <person name="Kravitz S."/>
            <person name="Kulp D."/>
            <person name="Lai Z."/>
            <person name="Lasko P."/>
            <person name="Lei Y."/>
            <person name="Levitsky A.A."/>
            <person name="Li J.H."/>
            <person name="Li Z."/>
            <person name="Liang Y."/>
            <person name="Lin X."/>
            <person name="Liu X."/>
            <person name="Mattei B."/>
            <person name="McIntosh T.C."/>
            <person name="McLeod M.P."/>
            <person name="McPherson D."/>
            <person name="Merkulov G."/>
            <person name="Milshina N.V."/>
            <person name="Mobarry C."/>
            <person name="Morris J."/>
            <person name="Moshrefi A."/>
            <person name="Mount S.M."/>
            <person name="Moy M."/>
            <person name="Murphy B."/>
            <person name="Murphy L."/>
            <person name="Muzny D.M."/>
            <person name="Nelson D.L."/>
            <person name="Nelson D.R."/>
            <person name="Nelson K.A."/>
            <person name="Nixon K."/>
            <person name="Nusskern D.R."/>
            <person name="Pacleb J.M."/>
            <person name="Palazzolo M."/>
            <person name="Pittman G.S."/>
            <person name="Pan S."/>
            <person name="Pollard J."/>
            <person name="Puri V."/>
            <person name="Reese M.G."/>
            <person name="Reinert K."/>
            <person name="Remington K."/>
            <person name="Saunders R.D.C."/>
            <person name="Scheeler F."/>
            <person name="Shen H."/>
            <person name="Shue B.C."/>
            <person name="Siden-Kiamos I."/>
            <person name="Simpson M."/>
            <person name="Skupski M.P."/>
            <person name="Smith T.J."/>
            <person name="Spier E."/>
            <person name="Spradling A.C."/>
            <person name="Stapleton M."/>
            <person name="Strong R."/>
            <person name="Sun E."/>
            <person name="Svirskas R."/>
            <person name="Tector C."/>
            <person name="Turner R."/>
            <person name="Venter E."/>
            <person name="Wang A.H."/>
            <person name="Wang X."/>
            <person name="Wang Z.-Y."/>
            <person name="Wassarman D.A."/>
            <person name="Weinstock G.M."/>
            <person name="Weissenbach J."/>
            <person name="Williams S.M."/>
            <person name="Woodage T."/>
            <person name="Worley K.C."/>
            <person name="Wu D."/>
            <person name="Yang S."/>
            <person name="Yao Q.A."/>
            <person name="Ye J."/>
            <person name="Yeh R.-F."/>
            <person name="Zaveri J.S."/>
            <person name="Zhan M."/>
            <person name="Zhang G."/>
            <person name="Zhao Q."/>
            <person name="Zheng L."/>
            <person name="Zheng X.H."/>
            <person name="Zhong F.N."/>
            <person name="Zhong W."/>
            <person name="Zhou X."/>
            <person name="Zhu S.C."/>
            <person name="Zhu X."/>
            <person name="Smith H.O."/>
            <person name="Gibbs R.A."/>
            <person name="Myers E.W."/>
            <person name="Rubin G.M."/>
            <person name="Venter J.C."/>
        </authorList>
    </citation>
    <scope>NUCLEOTIDE SEQUENCE [LARGE SCALE GENOMIC DNA]</scope>
    <source>
        <strain>Berkeley</strain>
    </source>
</reference>
<reference key="2">
    <citation type="journal article" date="2002" name="Genome Biol.">
        <title>Annotation of the Drosophila melanogaster euchromatic genome: a systematic review.</title>
        <authorList>
            <person name="Misra S."/>
            <person name="Crosby M.A."/>
            <person name="Mungall C.J."/>
            <person name="Matthews B.B."/>
            <person name="Campbell K.S."/>
            <person name="Hradecky P."/>
            <person name="Huang Y."/>
            <person name="Kaminker J.S."/>
            <person name="Millburn G.H."/>
            <person name="Prochnik S.E."/>
            <person name="Smith C.D."/>
            <person name="Tupy J.L."/>
            <person name="Whitfield E.J."/>
            <person name="Bayraktaroglu L."/>
            <person name="Berman B.P."/>
            <person name="Bettencourt B.R."/>
            <person name="Celniker S.E."/>
            <person name="de Grey A.D.N.J."/>
            <person name="Drysdale R.A."/>
            <person name="Harris N.L."/>
            <person name="Richter J."/>
            <person name="Russo S."/>
            <person name="Schroeder A.J."/>
            <person name="Shu S.Q."/>
            <person name="Stapleton M."/>
            <person name="Yamada C."/>
            <person name="Ashburner M."/>
            <person name="Gelbart W.M."/>
            <person name="Rubin G.M."/>
            <person name="Lewis S.E."/>
        </authorList>
    </citation>
    <scope>GENOME REANNOTATION</scope>
    <source>
        <strain>Berkeley</strain>
    </source>
</reference>
<reference key="3">
    <citation type="journal article" date="1992" name="Dev. Biol.">
        <title>Isolation and characterization of five Drosophila genes that encode an ets-related DNA binding domain.</title>
        <authorList>
            <person name="Chen T."/>
            <person name="Bunting M."/>
            <person name="Karim F.D."/>
            <person name="Thummel C.S."/>
        </authorList>
    </citation>
    <scope>NUCLEOTIDE SEQUENCE [GENOMIC DNA] OF 405-518</scope>
    <scope>FUNCTION</scope>
    <scope>TISSUE SPECIFICITY</scope>
    <scope>DEVELOPMENTAL STAGE</scope>
    <source>
        <strain>Canton-S</strain>
        <tissue>Larva</tissue>
    </source>
</reference>
<organism>
    <name type="scientific">Drosophila melanogaster</name>
    <name type="common">Fruit fly</name>
    <dbReference type="NCBI Taxonomy" id="7227"/>
    <lineage>
        <taxon>Eukaryota</taxon>
        <taxon>Metazoa</taxon>
        <taxon>Ecdysozoa</taxon>
        <taxon>Arthropoda</taxon>
        <taxon>Hexapoda</taxon>
        <taxon>Insecta</taxon>
        <taxon>Pterygota</taxon>
        <taxon>Neoptera</taxon>
        <taxon>Endopterygota</taxon>
        <taxon>Diptera</taxon>
        <taxon>Brachycera</taxon>
        <taxon>Muscomorpha</taxon>
        <taxon>Ephydroidea</taxon>
        <taxon>Drosophilidae</taxon>
        <taxon>Drosophila</taxon>
        <taxon>Sophophora</taxon>
    </lineage>
</organism>